<proteinExistence type="inferred from homology"/>
<accession>Q31UN0</accession>
<dbReference type="EC" id="2.7.7.23" evidence="1"/>
<dbReference type="EC" id="2.3.1.157" evidence="1"/>
<dbReference type="EMBL" id="CP000036">
    <property type="protein sequence ID" value="ABB68228.1"/>
    <property type="molecule type" value="Genomic_DNA"/>
</dbReference>
<dbReference type="RefSeq" id="WP_000933751.1">
    <property type="nucleotide sequence ID" value="NC_007613.1"/>
</dbReference>
<dbReference type="SMR" id="Q31UN0"/>
<dbReference type="KEGG" id="sbo:SBO_3757"/>
<dbReference type="HOGENOM" id="CLU_029499_15_2_6"/>
<dbReference type="UniPathway" id="UPA00113">
    <property type="reaction ID" value="UER00532"/>
</dbReference>
<dbReference type="UniPathway" id="UPA00113">
    <property type="reaction ID" value="UER00533"/>
</dbReference>
<dbReference type="UniPathway" id="UPA00973"/>
<dbReference type="Proteomes" id="UP000007067">
    <property type="component" value="Chromosome"/>
</dbReference>
<dbReference type="GO" id="GO:0005737">
    <property type="term" value="C:cytoplasm"/>
    <property type="evidence" value="ECO:0007669"/>
    <property type="project" value="UniProtKB-SubCell"/>
</dbReference>
<dbReference type="GO" id="GO:0016020">
    <property type="term" value="C:membrane"/>
    <property type="evidence" value="ECO:0007669"/>
    <property type="project" value="GOC"/>
</dbReference>
<dbReference type="GO" id="GO:0019134">
    <property type="term" value="F:glucosamine-1-phosphate N-acetyltransferase activity"/>
    <property type="evidence" value="ECO:0007669"/>
    <property type="project" value="UniProtKB-UniRule"/>
</dbReference>
<dbReference type="GO" id="GO:0000287">
    <property type="term" value="F:magnesium ion binding"/>
    <property type="evidence" value="ECO:0007669"/>
    <property type="project" value="UniProtKB-UniRule"/>
</dbReference>
<dbReference type="GO" id="GO:0003977">
    <property type="term" value="F:UDP-N-acetylglucosamine diphosphorylase activity"/>
    <property type="evidence" value="ECO:0007669"/>
    <property type="project" value="UniProtKB-UniRule"/>
</dbReference>
<dbReference type="GO" id="GO:0000902">
    <property type="term" value="P:cell morphogenesis"/>
    <property type="evidence" value="ECO:0007669"/>
    <property type="project" value="UniProtKB-UniRule"/>
</dbReference>
<dbReference type="GO" id="GO:0071555">
    <property type="term" value="P:cell wall organization"/>
    <property type="evidence" value="ECO:0007669"/>
    <property type="project" value="UniProtKB-KW"/>
</dbReference>
<dbReference type="GO" id="GO:0009245">
    <property type="term" value="P:lipid A biosynthetic process"/>
    <property type="evidence" value="ECO:0007669"/>
    <property type="project" value="UniProtKB-UniRule"/>
</dbReference>
<dbReference type="GO" id="GO:0009252">
    <property type="term" value="P:peptidoglycan biosynthetic process"/>
    <property type="evidence" value="ECO:0007669"/>
    <property type="project" value="UniProtKB-UniRule"/>
</dbReference>
<dbReference type="GO" id="GO:0008360">
    <property type="term" value="P:regulation of cell shape"/>
    <property type="evidence" value="ECO:0007669"/>
    <property type="project" value="UniProtKB-KW"/>
</dbReference>
<dbReference type="GO" id="GO:0006048">
    <property type="term" value="P:UDP-N-acetylglucosamine biosynthetic process"/>
    <property type="evidence" value="ECO:0007669"/>
    <property type="project" value="UniProtKB-UniPathway"/>
</dbReference>
<dbReference type="CDD" id="cd02540">
    <property type="entry name" value="GT2_GlmU_N_bac"/>
    <property type="match status" value="1"/>
</dbReference>
<dbReference type="CDD" id="cd03353">
    <property type="entry name" value="LbH_GlmU_C"/>
    <property type="match status" value="1"/>
</dbReference>
<dbReference type="FunFam" id="2.160.10.10:FF:000011">
    <property type="entry name" value="Bifunctional protein GlmU"/>
    <property type="match status" value="1"/>
</dbReference>
<dbReference type="FunFam" id="3.90.550.10:FF:000006">
    <property type="entry name" value="Bifunctional protein GlmU"/>
    <property type="match status" value="1"/>
</dbReference>
<dbReference type="Gene3D" id="2.160.10.10">
    <property type="entry name" value="Hexapeptide repeat proteins"/>
    <property type="match status" value="1"/>
</dbReference>
<dbReference type="Gene3D" id="3.90.550.10">
    <property type="entry name" value="Spore Coat Polysaccharide Biosynthesis Protein SpsA, Chain A"/>
    <property type="match status" value="1"/>
</dbReference>
<dbReference type="HAMAP" id="MF_01631">
    <property type="entry name" value="GlmU"/>
    <property type="match status" value="1"/>
</dbReference>
<dbReference type="InterPro" id="IPR005882">
    <property type="entry name" value="Bifunctional_GlmU"/>
</dbReference>
<dbReference type="InterPro" id="IPR050065">
    <property type="entry name" value="GlmU-like"/>
</dbReference>
<dbReference type="InterPro" id="IPR038009">
    <property type="entry name" value="GlmU_C_LbH"/>
</dbReference>
<dbReference type="InterPro" id="IPR001451">
    <property type="entry name" value="Hexapep"/>
</dbReference>
<dbReference type="InterPro" id="IPR018357">
    <property type="entry name" value="Hexapep_transf_CS"/>
</dbReference>
<dbReference type="InterPro" id="IPR025877">
    <property type="entry name" value="MobA-like_NTP_Trfase"/>
</dbReference>
<dbReference type="InterPro" id="IPR029044">
    <property type="entry name" value="Nucleotide-diphossugar_trans"/>
</dbReference>
<dbReference type="InterPro" id="IPR011004">
    <property type="entry name" value="Trimer_LpxA-like_sf"/>
</dbReference>
<dbReference type="NCBIfam" id="TIGR01173">
    <property type="entry name" value="glmU"/>
    <property type="match status" value="1"/>
</dbReference>
<dbReference type="NCBIfam" id="NF006986">
    <property type="entry name" value="PRK09451.1"/>
    <property type="match status" value="1"/>
</dbReference>
<dbReference type="PANTHER" id="PTHR43584:SF3">
    <property type="entry name" value="BIFUNCTIONAL PROTEIN GLMU"/>
    <property type="match status" value="1"/>
</dbReference>
<dbReference type="PANTHER" id="PTHR43584">
    <property type="entry name" value="NUCLEOTIDYL TRANSFERASE"/>
    <property type="match status" value="1"/>
</dbReference>
<dbReference type="Pfam" id="PF00132">
    <property type="entry name" value="Hexapep"/>
    <property type="match status" value="1"/>
</dbReference>
<dbReference type="Pfam" id="PF12804">
    <property type="entry name" value="NTP_transf_3"/>
    <property type="match status" value="1"/>
</dbReference>
<dbReference type="SUPFAM" id="SSF53448">
    <property type="entry name" value="Nucleotide-diphospho-sugar transferases"/>
    <property type="match status" value="1"/>
</dbReference>
<dbReference type="SUPFAM" id="SSF51161">
    <property type="entry name" value="Trimeric LpxA-like enzymes"/>
    <property type="match status" value="1"/>
</dbReference>
<dbReference type="PROSITE" id="PS00101">
    <property type="entry name" value="HEXAPEP_TRANSFERASES"/>
    <property type="match status" value="1"/>
</dbReference>
<protein>
    <recommendedName>
        <fullName evidence="1">Bifunctional protein GlmU</fullName>
    </recommendedName>
    <domain>
        <recommendedName>
            <fullName evidence="1">UDP-N-acetylglucosamine pyrophosphorylase</fullName>
            <ecNumber evidence="1">2.7.7.23</ecNumber>
        </recommendedName>
        <alternativeName>
            <fullName evidence="1">N-acetylglucosamine-1-phosphate uridyltransferase</fullName>
        </alternativeName>
    </domain>
    <domain>
        <recommendedName>
            <fullName evidence="1">Glucosamine-1-phosphate N-acetyltransferase</fullName>
            <ecNumber evidence="1">2.3.1.157</ecNumber>
        </recommendedName>
    </domain>
</protein>
<evidence type="ECO:0000255" key="1">
    <source>
        <dbReference type="HAMAP-Rule" id="MF_01631"/>
    </source>
</evidence>
<keyword id="KW-0012">Acyltransferase</keyword>
<keyword id="KW-0133">Cell shape</keyword>
<keyword id="KW-0961">Cell wall biogenesis/degradation</keyword>
<keyword id="KW-0963">Cytoplasm</keyword>
<keyword id="KW-0460">Magnesium</keyword>
<keyword id="KW-0479">Metal-binding</keyword>
<keyword id="KW-0511">Multifunctional enzyme</keyword>
<keyword id="KW-0548">Nucleotidyltransferase</keyword>
<keyword id="KW-0573">Peptidoglycan synthesis</keyword>
<keyword id="KW-0677">Repeat</keyword>
<keyword id="KW-0808">Transferase</keyword>
<reference key="1">
    <citation type="journal article" date="2005" name="Nucleic Acids Res.">
        <title>Genome dynamics and diversity of Shigella species, the etiologic agents of bacillary dysentery.</title>
        <authorList>
            <person name="Yang F."/>
            <person name="Yang J."/>
            <person name="Zhang X."/>
            <person name="Chen L."/>
            <person name="Jiang Y."/>
            <person name="Yan Y."/>
            <person name="Tang X."/>
            <person name="Wang J."/>
            <person name="Xiong Z."/>
            <person name="Dong J."/>
            <person name="Xue Y."/>
            <person name="Zhu Y."/>
            <person name="Xu X."/>
            <person name="Sun L."/>
            <person name="Chen S."/>
            <person name="Nie H."/>
            <person name="Peng J."/>
            <person name="Xu J."/>
            <person name="Wang Y."/>
            <person name="Yuan Z."/>
            <person name="Wen Y."/>
            <person name="Yao Z."/>
            <person name="Shen Y."/>
            <person name="Qiang B."/>
            <person name="Hou Y."/>
            <person name="Yu J."/>
            <person name="Jin Q."/>
        </authorList>
    </citation>
    <scope>NUCLEOTIDE SEQUENCE [LARGE SCALE GENOMIC DNA]</scope>
    <source>
        <strain>Sb227</strain>
    </source>
</reference>
<sequence>MLNNAMSVVILAAGKGTRMYSDLPKVLHTLAGKAMVQHVIDAANELGAAHVHLVYGHGGDLLKQALKDDNLNWVLQAEQLGTGHAMQQAAPFFADDEDILMLYGDVPLISVETLQRLRDAKPQGGIGLLTVKLDDPTGYGRITRENGKVTGIVEHKDATDEQRQIQEINTGILISNGADMKRWLAKLTNNNAQGEYYITDIIALAYQEGREIVAVHPQRLSEVEGVNNRLQLSRLERVYQSEQAEKLLLAGVMLRDPARFDLRGTLTHGRDVEIDTNVIIEGNVTLGHRVKIGTGCVIKNSVIGDDCEISPYTVVEDVNLAAACTIGPFARLRPGAELLEGAHVGNFVEMKKARLGKGSKAGHLTYLGDAEIGDNVNIGAGTITCNYDGANKFKTIIGDDVFVGSDTQLVAPVTVGKGATIAAGTTVTRNVGENALAISRVPQTQKEGWRRPVKKK</sequence>
<name>GLMU_SHIBS</name>
<feature type="chain" id="PRO_0000233840" description="Bifunctional protein GlmU">
    <location>
        <begin position="1"/>
        <end position="456"/>
    </location>
</feature>
<feature type="region of interest" description="Pyrophosphorylase" evidence="1">
    <location>
        <begin position="1"/>
        <end position="229"/>
    </location>
</feature>
<feature type="region of interest" description="Linker" evidence="1">
    <location>
        <begin position="230"/>
        <end position="250"/>
    </location>
</feature>
<feature type="region of interest" description="N-acetyltransferase" evidence="1">
    <location>
        <begin position="251"/>
        <end position="456"/>
    </location>
</feature>
<feature type="active site" description="Proton acceptor" evidence="1">
    <location>
        <position position="363"/>
    </location>
</feature>
<feature type="binding site" evidence="1">
    <location>
        <begin position="11"/>
        <end position="14"/>
    </location>
    <ligand>
        <name>UDP-N-acetyl-alpha-D-glucosamine</name>
        <dbReference type="ChEBI" id="CHEBI:57705"/>
    </ligand>
</feature>
<feature type="binding site" evidence="1">
    <location>
        <position position="25"/>
    </location>
    <ligand>
        <name>UDP-N-acetyl-alpha-D-glucosamine</name>
        <dbReference type="ChEBI" id="CHEBI:57705"/>
    </ligand>
</feature>
<feature type="binding site" evidence="1">
    <location>
        <position position="76"/>
    </location>
    <ligand>
        <name>UDP-N-acetyl-alpha-D-glucosamine</name>
        <dbReference type="ChEBI" id="CHEBI:57705"/>
    </ligand>
</feature>
<feature type="binding site" evidence="1">
    <location>
        <begin position="81"/>
        <end position="82"/>
    </location>
    <ligand>
        <name>UDP-N-acetyl-alpha-D-glucosamine</name>
        <dbReference type="ChEBI" id="CHEBI:57705"/>
    </ligand>
</feature>
<feature type="binding site" evidence="1">
    <location>
        <begin position="103"/>
        <end position="105"/>
    </location>
    <ligand>
        <name>UDP-N-acetyl-alpha-D-glucosamine</name>
        <dbReference type="ChEBI" id="CHEBI:57705"/>
    </ligand>
</feature>
<feature type="binding site" evidence="1">
    <location>
        <position position="105"/>
    </location>
    <ligand>
        <name>Mg(2+)</name>
        <dbReference type="ChEBI" id="CHEBI:18420"/>
    </ligand>
</feature>
<feature type="binding site" evidence="1">
    <location>
        <position position="140"/>
    </location>
    <ligand>
        <name>UDP-N-acetyl-alpha-D-glucosamine</name>
        <dbReference type="ChEBI" id="CHEBI:57705"/>
    </ligand>
</feature>
<feature type="binding site" evidence="1">
    <location>
        <position position="154"/>
    </location>
    <ligand>
        <name>UDP-N-acetyl-alpha-D-glucosamine</name>
        <dbReference type="ChEBI" id="CHEBI:57705"/>
    </ligand>
</feature>
<feature type="binding site" evidence="1">
    <location>
        <position position="169"/>
    </location>
    <ligand>
        <name>UDP-N-acetyl-alpha-D-glucosamine</name>
        <dbReference type="ChEBI" id="CHEBI:57705"/>
    </ligand>
</feature>
<feature type="binding site" evidence="1">
    <location>
        <position position="227"/>
    </location>
    <ligand>
        <name>Mg(2+)</name>
        <dbReference type="ChEBI" id="CHEBI:18420"/>
    </ligand>
</feature>
<feature type="binding site" evidence="1">
    <location>
        <position position="227"/>
    </location>
    <ligand>
        <name>UDP-N-acetyl-alpha-D-glucosamine</name>
        <dbReference type="ChEBI" id="CHEBI:57705"/>
    </ligand>
</feature>
<feature type="binding site" evidence="1">
    <location>
        <position position="333"/>
    </location>
    <ligand>
        <name>UDP-N-acetyl-alpha-D-glucosamine</name>
        <dbReference type="ChEBI" id="CHEBI:57705"/>
    </ligand>
</feature>
<feature type="binding site" evidence="1">
    <location>
        <position position="351"/>
    </location>
    <ligand>
        <name>UDP-N-acetyl-alpha-D-glucosamine</name>
        <dbReference type="ChEBI" id="CHEBI:57705"/>
    </ligand>
</feature>
<feature type="binding site" evidence="1">
    <location>
        <position position="366"/>
    </location>
    <ligand>
        <name>UDP-N-acetyl-alpha-D-glucosamine</name>
        <dbReference type="ChEBI" id="CHEBI:57705"/>
    </ligand>
</feature>
<feature type="binding site" evidence="1">
    <location>
        <position position="377"/>
    </location>
    <ligand>
        <name>UDP-N-acetyl-alpha-D-glucosamine</name>
        <dbReference type="ChEBI" id="CHEBI:57705"/>
    </ligand>
</feature>
<feature type="binding site" evidence="1">
    <location>
        <position position="380"/>
    </location>
    <ligand>
        <name>acetyl-CoA</name>
        <dbReference type="ChEBI" id="CHEBI:57288"/>
    </ligand>
</feature>
<feature type="binding site" evidence="1">
    <location>
        <begin position="386"/>
        <end position="387"/>
    </location>
    <ligand>
        <name>acetyl-CoA</name>
        <dbReference type="ChEBI" id="CHEBI:57288"/>
    </ligand>
</feature>
<feature type="binding site" evidence="1">
    <location>
        <position position="405"/>
    </location>
    <ligand>
        <name>acetyl-CoA</name>
        <dbReference type="ChEBI" id="CHEBI:57288"/>
    </ligand>
</feature>
<feature type="binding site" evidence="1">
    <location>
        <position position="423"/>
    </location>
    <ligand>
        <name>acetyl-CoA</name>
        <dbReference type="ChEBI" id="CHEBI:57288"/>
    </ligand>
</feature>
<feature type="binding site" evidence="1">
    <location>
        <position position="440"/>
    </location>
    <ligand>
        <name>acetyl-CoA</name>
        <dbReference type="ChEBI" id="CHEBI:57288"/>
    </ligand>
</feature>
<gene>
    <name evidence="1" type="primary">glmU</name>
    <name type="ordered locus">SBO_3757</name>
</gene>
<organism>
    <name type="scientific">Shigella boydii serotype 4 (strain Sb227)</name>
    <dbReference type="NCBI Taxonomy" id="300268"/>
    <lineage>
        <taxon>Bacteria</taxon>
        <taxon>Pseudomonadati</taxon>
        <taxon>Pseudomonadota</taxon>
        <taxon>Gammaproteobacteria</taxon>
        <taxon>Enterobacterales</taxon>
        <taxon>Enterobacteriaceae</taxon>
        <taxon>Shigella</taxon>
    </lineage>
</organism>
<comment type="function">
    <text evidence="1">Catalyzes the last two sequential reactions in the de novo biosynthetic pathway for UDP-N-acetylglucosamine (UDP-GlcNAc). The C-terminal domain catalyzes the transfer of acetyl group from acetyl coenzyme A to glucosamine-1-phosphate (GlcN-1-P) to produce N-acetylglucosamine-1-phosphate (GlcNAc-1-P), which is converted into UDP-GlcNAc by the transfer of uridine 5-monophosphate (from uridine 5-triphosphate), a reaction catalyzed by the N-terminal domain.</text>
</comment>
<comment type="catalytic activity">
    <reaction evidence="1">
        <text>alpha-D-glucosamine 1-phosphate + acetyl-CoA = N-acetyl-alpha-D-glucosamine 1-phosphate + CoA + H(+)</text>
        <dbReference type="Rhea" id="RHEA:13725"/>
        <dbReference type="ChEBI" id="CHEBI:15378"/>
        <dbReference type="ChEBI" id="CHEBI:57287"/>
        <dbReference type="ChEBI" id="CHEBI:57288"/>
        <dbReference type="ChEBI" id="CHEBI:57776"/>
        <dbReference type="ChEBI" id="CHEBI:58516"/>
        <dbReference type="EC" id="2.3.1.157"/>
    </reaction>
</comment>
<comment type="catalytic activity">
    <reaction evidence="1">
        <text>N-acetyl-alpha-D-glucosamine 1-phosphate + UTP + H(+) = UDP-N-acetyl-alpha-D-glucosamine + diphosphate</text>
        <dbReference type="Rhea" id="RHEA:13509"/>
        <dbReference type="ChEBI" id="CHEBI:15378"/>
        <dbReference type="ChEBI" id="CHEBI:33019"/>
        <dbReference type="ChEBI" id="CHEBI:46398"/>
        <dbReference type="ChEBI" id="CHEBI:57705"/>
        <dbReference type="ChEBI" id="CHEBI:57776"/>
        <dbReference type="EC" id="2.7.7.23"/>
    </reaction>
</comment>
<comment type="cofactor">
    <cofactor evidence="1">
        <name>Mg(2+)</name>
        <dbReference type="ChEBI" id="CHEBI:18420"/>
    </cofactor>
    <text evidence="1">Binds 1 Mg(2+) ion per subunit.</text>
</comment>
<comment type="pathway">
    <text evidence="1">Nucleotide-sugar biosynthesis; UDP-N-acetyl-alpha-D-glucosamine biosynthesis; N-acetyl-alpha-D-glucosamine 1-phosphate from alpha-D-glucosamine 6-phosphate (route II): step 2/2.</text>
</comment>
<comment type="pathway">
    <text evidence="1">Nucleotide-sugar biosynthesis; UDP-N-acetyl-alpha-D-glucosamine biosynthesis; UDP-N-acetyl-alpha-D-glucosamine from N-acetyl-alpha-D-glucosamine 1-phosphate: step 1/1.</text>
</comment>
<comment type="pathway">
    <text evidence="1">Bacterial outer membrane biogenesis; LPS lipid A biosynthesis.</text>
</comment>
<comment type="subunit">
    <text evidence="1">Homotrimer.</text>
</comment>
<comment type="subcellular location">
    <subcellularLocation>
        <location evidence="1">Cytoplasm</location>
    </subcellularLocation>
</comment>
<comment type="similarity">
    <text evidence="1">In the N-terminal section; belongs to the N-acetylglucosamine-1-phosphate uridyltransferase family.</text>
</comment>
<comment type="similarity">
    <text evidence="1">In the C-terminal section; belongs to the transferase hexapeptide repeat family.</text>
</comment>